<accession>Q9VW15</accession>
<accession>A8WHI9</accession>
<accession>M9NFL0</accession>
<accession>Q24189</accession>
<accession>Q8MQX5</accession>
<proteinExistence type="evidence at protein level"/>
<comment type="function">
    <text evidence="10 11 12">Trithorax group (TrxG) protein that has histone methyltransferase activity (PubMed:13679578, PubMed:16882982). Specifically trimethylates 'Lys-4' of histone H3 (H3K4me3), a specific tag for epigenetic transcriptional activation (PubMed:13679578, PubMed:16882982). TrxG proteins are generally required to maintain the transcriptionally active state of homeotic genes throughout development. Does not act as a coactivator required for transcriptional activation, but specifically prevents inappropriate Polycomb Group (PcG) silencing of homeotic genes in cells in which they must stay transcriptionally active (PubMed:15031712).</text>
</comment>
<comment type="catalytic activity">
    <reaction evidence="10">
        <text>L-lysyl(4)-[histone H3] + 3 S-adenosyl-L-methionine = N(6),N(6),N(6)-trimethyl-L-lysyl(4)-[histone H3] + 3 S-adenosyl-L-homocysteine + 3 H(+)</text>
        <dbReference type="Rhea" id="RHEA:60260"/>
        <dbReference type="Rhea" id="RHEA-COMP:15537"/>
        <dbReference type="Rhea" id="RHEA-COMP:15547"/>
        <dbReference type="ChEBI" id="CHEBI:15378"/>
        <dbReference type="ChEBI" id="CHEBI:29969"/>
        <dbReference type="ChEBI" id="CHEBI:57856"/>
        <dbReference type="ChEBI" id="CHEBI:59789"/>
        <dbReference type="ChEBI" id="CHEBI:61961"/>
        <dbReference type="EC" id="2.1.1.354"/>
    </reaction>
</comment>
<comment type="subunit">
    <text evidence="7 8 9 16">Component of a large multiprotein complex distinct from complexes containing ash2 or brm (PubMed:9735357). Interacts (via SET domain) with trx (via SET domain) (PubMed:10454589, PubMed:10656681). Interacts with nej/cbp (PubMed:11094082).</text>
</comment>
<comment type="interaction">
    <interactant intactId="EBI-124480">
        <id>Q9VW15</id>
    </interactant>
    <interactant intactId="EBI-124480">
        <id>Q9VW15</id>
        <label>ash1</label>
    </interactant>
    <organismsDiffer>false</organismsDiffer>
    <experiments>3</experiments>
</comment>
<comment type="subcellular location">
    <subcellularLocation>
        <location>Nucleus</location>
    </subcellularLocation>
    <subcellularLocation>
        <location evidence="7 15">Chromosome</location>
    </subcellularLocation>
    <text evidence="12">Localizes at the promoter of active genes.</text>
</comment>
<comment type="tissue specificity">
    <text evidence="14">Expressed throughout development but is present at higher levels during the embryonic and pupal stages than during the larval stages. During the larval stages it accumulates primarily in imaginal disks.</text>
</comment>
<comment type="developmental stage">
    <text evidence="14">Expressed both maternally and zygotically. During oogenesis it accumulates in the nurse cells of developing egg chambers.</text>
</comment>
<comment type="domain">
    <text evidence="10">The SET domain is sufficient for methyltransferase activity.</text>
</comment>
<comment type="similarity">
    <text evidence="3">Belongs to the class V-like SAM-binding methyltransferase superfamily. Histone-lysine methyltransferase family. SET2 subfamily.</text>
</comment>
<comment type="caution">
    <text evidence="18 19">Was reported to trimethylate H3 'Lys-9' and H4 'Lys-20' (PubMed:12397363). Was also reported to bind non-coding RNAs of trithorax response element (TRE) (PubMed:16497925). However, both papers were retracted because some data, results and conclusions are not reliable.</text>
</comment>
<comment type="sequence caution" evidence="17">
    <conflict type="erroneous gene model prediction">
        <sequence resource="EMBL-CDS" id="AAB01100"/>
    </conflict>
</comment>
<comment type="sequence caution" evidence="17">
    <conflict type="miscellaneous discrepancy">
        <sequence resource="EMBL-CDS" id="AAM52758"/>
    </conflict>
    <text>Contaminating sequence. Potential poly-A sequence.</text>
</comment>
<comment type="sequence caution" evidence="17">
    <conflict type="frameshift">
        <sequence resource="EMBL-CDS" id="ABX00757"/>
    </conflict>
</comment>
<name>ASH1_DROME</name>
<reference key="1">
    <citation type="journal article" date="1996" name="Genetics">
        <title>The Drosophila ash1 gene product, which is localized at specific sites on polytene chromosomes, contains a SET domain and a PHD finger.</title>
        <authorList>
            <person name="Tripoulas N."/>
            <person name="LaJeunesse D."/>
            <person name="Gildea J."/>
            <person name="Shearn A."/>
        </authorList>
    </citation>
    <scope>NUCLEOTIDE SEQUENCE [GENOMIC DNA]</scope>
    <scope>SUBCELLULAR LOCATION</scope>
    <scope>MUTAGENESIS OF GLU-1284 AND ASN-1473</scope>
</reference>
<reference key="2">
    <citation type="journal article" date="2000" name="Science">
        <title>The genome sequence of Drosophila melanogaster.</title>
        <authorList>
            <person name="Adams M.D."/>
            <person name="Celniker S.E."/>
            <person name="Holt R.A."/>
            <person name="Evans C.A."/>
            <person name="Gocayne J.D."/>
            <person name="Amanatides P.G."/>
            <person name="Scherer S.E."/>
            <person name="Li P.W."/>
            <person name="Hoskins R.A."/>
            <person name="Galle R.F."/>
            <person name="George R.A."/>
            <person name="Lewis S.E."/>
            <person name="Richards S."/>
            <person name="Ashburner M."/>
            <person name="Henderson S.N."/>
            <person name="Sutton G.G."/>
            <person name="Wortman J.R."/>
            <person name="Yandell M.D."/>
            <person name="Zhang Q."/>
            <person name="Chen L.X."/>
            <person name="Brandon R.C."/>
            <person name="Rogers Y.-H.C."/>
            <person name="Blazej R.G."/>
            <person name="Champe M."/>
            <person name="Pfeiffer B.D."/>
            <person name="Wan K.H."/>
            <person name="Doyle C."/>
            <person name="Baxter E.G."/>
            <person name="Helt G."/>
            <person name="Nelson C.R."/>
            <person name="Miklos G.L.G."/>
            <person name="Abril J.F."/>
            <person name="Agbayani A."/>
            <person name="An H.-J."/>
            <person name="Andrews-Pfannkoch C."/>
            <person name="Baldwin D."/>
            <person name="Ballew R.M."/>
            <person name="Basu A."/>
            <person name="Baxendale J."/>
            <person name="Bayraktaroglu L."/>
            <person name="Beasley E.M."/>
            <person name="Beeson K.Y."/>
            <person name="Benos P.V."/>
            <person name="Berman B.P."/>
            <person name="Bhandari D."/>
            <person name="Bolshakov S."/>
            <person name="Borkova D."/>
            <person name="Botchan M.R."/>
            <person name="Bouck J."/>
            <person name="Brokstein P."/>
            <person name="Brottier P."/>
            <person name="Burtis K.C."/>
            <person name="Busam D.A."/>
            <person name="Butler H."/>
            <person name="Cadieu E."/>
            <person name="Center A."/>
            <person name="Chandra I."/>
            <person name="Cherry J.M."/>
            <person name="Cawley S."/>
            <person name="Dahlke C."/>
            <person name="Davenport L.B."/>
            <person name="Davies P."/>
            <person name="de Pablos B."/>
            <person name="Delcher A."/>
            <person name="Deng Z."/>
            <person name="Mays A.D."/>
            <person name="Dew I."/>
            <person name="Dietz S.M."/>
            <person name="Dodson K."/>
            <person name="Doup L.E."/>
            <person name="Downes M."/>
            <person name="Dugan-Rocha S."/>
            <person name="Dunkov B.C."/>
            <person name="Dunn P."/>
            <person name="Durbin K.J."/>
            <person name="Evangelista C.C."/>
            <person name="Ferraz C."/>
            <person name="Ferriera S."/>
            <person name="Fleischmann W."/>
            <person name="Fosler C."/>
            <person name="Gabrielian A.E."/>
            <person name="Garg N.S."/>
            <person name="Gelbart W.M."/>
            <person name="Glasser K."/>
            <person name="Glodek A."/>
            <person name="Gong F."/>
            <person name="Gorrell J.H."/>
            <person name="Gu Z."/>
            <person name="Guan P."/>
            <person name="Harris M."/>
            <person name="Harris N.L."/>
            <person name="Harvey D.A."/>
            <person name="Heiman T.J."/>
            <person name="Hernandez J.R."/>
            <person name="Houck J."/>
            <person name="Hostin D."/>
            <person name="Houston K.A."/>
            <person name="Howland T.J."/>
            <person name="Wei M.-H."/>
            <person name="Ibegwam C."/>
            <person name="Jalali M."/>
            <person name="Kalush F."/>
            <person name="Karpen G.H."/>
            <person name="Ke Z."/>
            <person name="Kennison J.A."/>
            <person name="Ketchum K.A."/>
            <person name="Kimmel B.E."/>
            <person name="Kodira C.D."/>
            <person name="Kraft C.L."/>
            <person name="Kravitz S."/>
            <person name="Kulp D."/>
            <person name="Lai Z."/>
            <person name="Lasko P."/>
            <person name="Lei Y."/>
            <person name="Levitsky A.A."/>
            <person name="Li J.H."/>
            <person name="Li Z."/>
            <person name="Liang Y."/>
            <person name="Lin X."/>
            <person name="Liu X."/>
            <person name="Mattei B."/>
            <person name="McIntosh T.C."/>
            <person name="McLeod M.P."/>
            <person name="McPherson D."/>
            <person name="Merkulov G."/>
            <person name="Milshina N.V."/>
            <person name="Mobarry C."/>
            <person name="Morris J."/>
            <person name="Moshrefi A."/>
            <person name="Mount S.M."/>
            <person name="Moy M."/>
            <person name="Murphy B."/>
            <person name="Murphy L."/>
            <person name="Muzny D.M."/>
            <person name="Nelson D.L."/>
            <person name="Nelson D.R."/>
            <person name="Nelson K.A."/>
            <person name="Nixon K."/>
            <person name="Nusskern D.R."/>
            <person name="Pacleb J.M."/>
            <person name="Palazzolo M."/>
            <person name="Pittman G.S."/>
            <person name="Pan S."/>
            <person name="Pollard J."/>
            <person name="Puri V."/>
            <person name="Reese M.G."/>
            <person name="Reinert K."/>
            <person name="Remington K."/>
            <person name="Saunders R.D.C."/>
            <person name="Scheeler F."/>
            <person name="Shen H."/>
            <person name="Shue B.C."/>
            <person name="Siden-Kiamos I."/>
            <person name="Simpson M."/>
            <person name="Skupski M.P."/>
            <person name="Smith T.J."/>
            <person name="Spier E."/>
            <person name="Spradling A.C."/>
            <person name="Stapleton M."/>
            <person name="Strong R."/>
            <person name="Sun E."/>
            <person name="Svirskas R."/>
            <person name="Tector C."/>
            <person name="Turner R."/>
            <person name="Venter E."/>
            <person name="Wang A.H."/>
            <person name="Wang X."/>
            <person name="Wang Z.-Y."/>
            <person name="Wassarman D.A."/>
            <person name="Weinstock G.M."/>
            <person name="Weissenbach J."/>
            <person name="Williams S.M."/>
            <person name="Woodage T."/>
            <person name="Worley K.C."/>
            <person name="Wu D."/>
            <person name="Yang S."/>
            <person name="Yao Q.A."/>
            <person name="Ye J."/>
            <person name="Yeh R.-F."/>
            <person name="Zaveri J.S."/>
            <person name="Zhan M."/>
            <person name="Zhang G."/>
            <person name="Zhao Q."/>
            <person name="Zheng L."/>
            <person name="Zheng X.H."/>
            <person name="Zhong F.N."/>
            <person name="Zhong W."/>
            <person name="Zhou X."/>
            <person name="Zhu S.C."/>
            <person name="Zhu X."/>
            <person name="Smith H.O."/>
            <person name="Gibbs R.A."/>
            <person name="Myers E.W."/>
            <person name="Rubin G.M."/>
            <person name="Venter J.C."/>
        </authorList>
    </citation>
    <scope>NUCLEOTIDE SEQUENCE [LARGE SCALE GENOMIC DNA]</scope>
    <source>
        <strain>Berkeley</strain>
    </source>
</reference>
<reference key="3">
    <citation type="journal article" date="2002" name="Genome Biol.">
        <title>Annotation of the Drosophila melanogaster euchromatic genome: a systematic review.</title>
        <authorList>
            <person name="Misra S."/>
            <person name="Crosby M.A."/>
            <person name="Mungall C.J."/>
            <person name="Matthews B.B."/>
            <person name="Campbell K.S."/>
            <person name="Hradecky P."/>
            <person name="Huang Y."/>
            <person name="Kaminker J.S."/>
            <person name="Millburn G.H."/>
            <person name="Prochnik S.E."/>
            <person name="Smith C.D."/>
            <person name="Tupy J.L."/>
            <person name="Whitfield E.J."/>
            <person name="Bayraktaroglu L."/>
            <person name="Berman B.P."/>
            <person name="Bettencourt B.R."/>
            <person name="Celniker S.E."/>
            <person name="de Grey A.D.N.J."/>
            <person name="Drysdale R.A."/>
            <person name="Harris N.L."/>
            <person name="Richter J."/>
            <person name="Russo S."/>
            <person name="Schroeder A.J."/>
            <person name="Shu S.Q."/>
            <person name="Stapleton M."/>
            <person name="Yamada C."/>
            <person name="Ashburner M."/>
            <person name="Gelbart W.M."/>
            <person name="Rubin G.M."/>
            <person name="Lewis S.E."/>
        </authorList>
    </citation>
    <scope>GENOME REANNOTATION</scope>
    <source>
        <strain>Berkeley</strain>
    </source>
</reference>
<reference key="4">
    <citation type="journal article" date="2002" name="Genome Biol.">
        <title>A Drosophila full-length cDNA resource.</title>
        <authorList>
            <person name="Stapleton M."/>
            <person name="Carlson J.W."/>
            <person name="Brokstein P."/>
            <person name="Yu C."/>
            <person name="Champe M."/>
            <person name="George R.A."/>
            <person name="Guarin H."/>
            <person name="Kronmiller B."/>
            <person name="Pacleb J.M."/>
            <person name="Park S."/>
            <person name="Wan K.H."/>
            <person name="Rubin G.M."/>
            <person name="Celniker S.E."/>
        </authorList>
    </citation>
    <scope>NUCLEOTIDE SEQUENCE [LARGE SCALE MRNA] OF 1-1120</scope>
    <source>
        <strain>Berkeley</strain>
        <tissue>Embryo</tissue>
    </source>
</reference>
<reference key="5">
    <citation type="journal article" date="1994" name="Genetics">
        <title>Molecular genetic analysis of the Drosophila melanogaster gene absent, small or homeotic discs1 (ash1).</title>
        <authorList>
            <person name="Tripoulas N.A."/>
            <person name="Hersperger E."/>
            <person name="La Jeunesse D."/>
            <person name="Shearn A."/>
        </authorList>
    </citation>
    <scope>TISSUE SPECIFICITY</scope>
    <scope>DEVELOPMENTAL STAGE</scope>
</reference>
<reference key="6">
    <citation type="journal article" date="1998" name="Development">
        <title>The Drosophila trithorax group proteins BRM, ASH1 and ASH2 are subunits of distinct protein complexes.</title>
        <authorList>
            <person name="Papoulas O."/>
            <person name="Beek S.J."/>
            <person name="Moseley S.L."/>
            <person name="McCallum C.M."/>
            <person name="Sarte M."/>
            <person name="Shearn A."/>
            <person name="Tamkun J.W."/>
        </authorList>
    </citation>
    <scope>SUBUNIT</scope>
</reference>
<reference key="7">
    <citation type="journal article" date="1999" name="Mol. Cell. Biol.">
        <title>Trithorax and ASH1 interact directly and associate with the trithorax group-responsive bxd region of the Ultrabithorax promoter.</title>
        <authorList>
            <person name="Rozovskaia T."/>
            <person name="Tillib S."/>
            <person name="Smith S."/>
            <person name="Sedkov Y."/>
            <person name="Rozenblatt-Rosen O."/>
            <person name="Petruk S."/>
            <person name="Yano T."/>
            <person name="Nakamura T."/>
            <person name="Ben-Simchon L."/>
            <person name="Gildea J."/>
            <person name="Croce C.M."/>
            <person name="Shearn A."/>
            <person name="Canaani E."/>
            <person name="Mazo A."/>
        </authorList>
    </citation>
    <scope>SUBCELLULAR LOCATION</scope>
    <scope>INTERACTION WITH TRX</scope>
</reference>
<reference key="8">
    <citation type="journal article" date="2000" name="Mol. Cell. Biol.">
        <title>Functional interaction between the coactivator Drosophila CREB-binding protein and ASH1, a member of the trithorax group of chromatin modifiers.</title>
        <authorList>
            <person name="Bantignies F."/>
            <person name="Goodman R.H."/>
            <person name="Smolik S.M."/>
        </authorList>
    </citation>
    <scope>INTERACTION WITH NEJ</scope>
</reference>
<reference key="9">
    <citation type="journal article" date="2000" name="Oncogene">
        <title>Self-association of the SET domains of human ALL-1 and of Drosophila TRITHORAX and ASH1 proteins.</title>
        <authorList>
            <person name="Rozovskaia T."/>
            <person name="Rozenblatt-Rosen O."/>
            <person name="Sedkov Y."/>
            <person name="Burakov D."/>
            <person name="Yano T."/>
            <person name="Nakamura T."/>
            <person name="Petruck S."/>
            <person name="Ben-Simchon L."/>
            <person name="Croce C.M."/>
            <person name="Mazo A."/>
            <person name="Canaani E."/>
        </authorList>
    </citation>
    <scope>INTERACTION WITH TRX</scope>
</reference>
<reference key="10">
    <citation type="journal article" date="2002" name="Nature">
        <title>Histone methylation by the Drosophila epigenetic transcriptional regulator Ash1.</title>
        <authorList>
            <person name="Beisel C."/>
            <person name="Imhof A."/>
            <person name="Greene J."/>
            <person name="Kremmer E."/>
            <person name="Sauer F."/>
        </authorList>
    </citation>
    <scope>RETRACTED PAPER</scope>
</reference>
<reference key="11">
    <citation type="journal article" date="2015" name="Nature">
        <authorList>
            <person name="Beisel C."/>
            <person name="Imhof A."/>
            <person name="Greene J."/>
            <person name="Kremmer E."/>
            <person name="Sauer F."/>
        </authorList>
    </citation>
    <scope>RETRACTION NOTICE OF PUBMED:12397363</scope>
</reference>
<reference key="12">
    <citation type="journal article" date="2003" name="Proc. Natl. Acad. Sci. U.S.A.">
        <title>ASH1, a Drosophila trithorax group protein, is required for methylation of lysine 4 residues on histone H3.</title>
        <authorList>
            <person name="Byrd K.N."/>
            <person name="Shearn A."/>
        </authorList>
    </citation>
    <scope>FUNCTION</scope>
    <scope>SET DOMAIN</scope>
    <scope>CATALYTIC ACTIVITY</scope>
</reference>
<reference key="13">
    <citation type="journal article" date="2004" name="EMBO Rep.">
        <title>The histone methyltransferases Trithorax and Ash1 prevent transcriptional silencing by Polycomb group proteins.</title>
        <authorList>
            <person name="Klymenko T."/>
            <person name="Mueller J."/>
        </authorList>
    </citation>
    <scope>FUNCTION</scope>
</reference>
<reference key="14">
    <citation type="journal article" date="2006" name="Genes Dev.">
        <title>Histone trimethylation and the maintenance of transcriptional ON and OFF states by trxG and PcG proteins.</title>
        <authorList>
            <person name="Papp B."/>
            <person name="Mueller J."/>
        </authorList>
    </citation>
    <scope>FUNCTION</scope>
    <scope>SUBCELLULAR LOCATION</scope>
</reference>
<reference key="15">
    <citation type="journal article" date="2006" name="Science">
        <title>Noncoding RNAs of trithorax response elements recruit Drosophila Ash1 to Ultrabithorax.</title>
        <authorList>
            <person name="Sanchez-Elsner T."/>
            <person name="Gou D."/>
            <person name="Kremmer E."/>
            <person name="Sauer F."/>
        </authorList>
    </citation>
    <scope>RETRACTED PAPER</scope>
</reference>
<reference key="16">
    <citation type="journal article" date="2014" name="Science">
        <authorList>
            <person name="McNutt M."/>
        </authorList>
    </citation>
    <scope>RETRACTION NOTICE OF PUBMED:16497925</scope>
</reference>
<reference key="17">
    <citation type="journal article" date="2008" name="J. Proteome Res.">
        <title>Phosphoproteome analysis of Drosophila melanogaster embryos.</title>
        <authorList>
            <person name="Zhai B."/>
            <person name="Villen J."/>
            <person name="Beausoleil S.A."/>
            <person name="Mintseris J."/>
            <person name="Gygi S.P."/>
        </authorList>
    </citation>
    <scope>PHOSPHORYLATION [LARGE SCALE ANALYSIS] AT SER-135; SER-136; SER-138; THR-200; THR-201; SER-740; SER-831 AND SER-977</scope>
    <scope>IDENTIFICATION BY MASS SPECTROMETRY</scope>
    <source>
        <tissue>Embryo</tissue>
    </source>
</reference>
<feature type="chain" id="PRO_0000259518" description="Histone-lysine N-methyltransferase ash1">
    <location>
        <begin position="1"/>
        <end position="2226"/>
    </location>
</feature>
<feature type="domain" description="AWS" evidence="5">
    <location>
        <begin position="1339"/>
        <end position="1387"/>
    </location>
</feature>
<feature type="domain" description="SET" evidence="3">
    <location>
        <begin position="1390"/>
        <end position="1506"/>
    </location>
</feature>
<feature type="domain" description="Post-SET" evidence="2">
    <location>
        <begin position="1514"/>
        <end position="1530"/>
    </location>
</feature>
<feature type="domain" description="Bromo" evidence="1">
    <location>
        <begin position="1681"/>
        <end position="1789"/>
    </location>
</feature>
<feature type="domain" description="BAH" evidence="4">
    <location>
        <begin position="1952"/>
        <end position="2072"/>
    </location>
</feature>
<feature type="DNA-binding region" description="A.T hook 1">
    <location>
        <begin position="261"/>
        <end position="273"/>
    </location>
</feature>
<feature type="DNA-binding region" description="A.T hook 2">
    <location>
        <begin position="1065"/>
        <end position="1077"/>
    </location>
</feature>
<feature type="DNA-binding region" description="A.T hook 3">
    <location>
        <begin position="1095"/>
        <end position="1107"/>
    </location>
</feature>
<feature type="zinc finger region" description="PHD-type">
    <location>
        <begin position="1857"/>
        <end position="1903"/>
    </location>
</feature>
<feature type="region of interest" description="Disordered" evidence="6">
    <location>
        <begin position="1"/>
        <end position="145"/>
    </location>
</feature>
<feature type="region of interest" description="Disordered" evidence="6">
    <location>
        <begin position="260"/>
        <end position="324"/>
    </location>
</feature>
<feature type="region of interest" description="Disordered" evidence="6">
    <location>
        <begin position="343"/>
        <end position="367"/>
    </location>
</feature>
<feature type="region of interest" description="Disordered" evidence="6">
    <location>
        <begin position="673"/>
        <end position="695"/>
    </location>
</feature>
<feature type="region of interest" description="Disordered" evidence="6">
    <location>
        <begin position="711"/>
        <end position="749"/>
    </location>
</feature>
<feature type="region of interest" description="Disordered" evidence="6">
    <location>
        <begin position="811"/>
        <end position="832"/>
    </location>
</feature>
<feature type="region of interest" description="Disordered" evidence="6">
    <location>
        <begin position="980"/>
        <end position="1026"/>
    </location>
</feature>
<feature type="region of interest" description="Disordered" evidence="6">
    <location>
        <begin position="1049"/>
        <end position="1230"/>
    </location>
</feature>
<feature type="region of interest" description="Disordered" evidence="6">
    <location>
        <begin position="1536"/>
        <end position="1575"/>
    </location>
</feature>
<feature type="region of interest" description="Disordered" evidence="6">
    <location>
        <begin position="1616"/>
        <end position="1648"/>
    </location>
</feature>
<feature type="region of interest" description="Disordered" evidence="6">
    <location>
        <begin position="1808"/>
        <end position="1839"/>
    </location>
</feature>
<feature type="region of interest" description="Disordered" evidence="6">
    <location>
        <begin position="2205"/>
        <end position="2226"/>
    </location>
</feature>
<feature type="compositionally biased region" description="Polar residues" evidence="6">
    <location>
        <begin position="32"/>
        <end position="52"/>
    </location>
</feature>
<feature type="compositionally biased region" description="Basic residues" evidence="6">
    <location>
        <begin position="99"/>
        <end position="111"/>
    </location>
</feature>
<feature type="compositionally biased region" description="Basic residues" evidence="6">
    <location>
        <begin position="260"/>
        <end position="269"/>
    </location>
</feature>
<feature type="compositionally biased region" description="Low complexity" evidence="6">
    <location>
        <begin position="294"/>
        <end position="306"/>
    </location>
</feature>
<feature type="compositionally biased region" description="Polar residues" evidence="6">
    <location>
        <begin position="307"/>
        <end position="324"/>
    </location>
</feature>
<feature type="compositionally biased region" description="Low complexity" evidence="6">
    <location>
        <begin position="711"/>
        <end position="727"/>
    </location>
</feature>
<feature type="compositionally biased region" description="Low complexity" evidence="6">
    <location>
        <begin position="820"/>
        <end position="831"/>
    </location>
</feature>
<feature type="compositionally biased region" description="Acidic residues" evidence="6">
    <location>
        <begin position="989"/>
        <end position="999"/>
    </location>
</feature>
<feature type="compositionally biased region" description="Pro residues" evidence="6">
    <location>
        <begin position="1108"/>
        <end position="1117"/>
    </location>
</feature>
<feature type="compositionally biased region" description="Basic and acidic residues" evidence="6">
    <location>
        <begin position="1186"/>
        <end position="1200"/>
    </location>
</feature>
<feature type="compositionally biased region" description="Polar residues" evidence="6">
    <location>
        <begin position="1205"/>
        <end position="1219"/>
    </location>
</feature>
<feature type="compositionally biased region" description="Basic residues" evidence="6">
    <location>
        <begin position="1556"/>
        <end position="1568"/>
    </location>
</feature>
<feature type="compositionally biased region" description="Low complexity" evidence="6">
    <location>
        <begin position="1619"/>
        <end position="1628"/>
    </location>
</feature>
<feature type="compositionally biased region" description="Low complexity" evidence="6">
    <location>
        <begin position="1639"/>
        <end position="1648"/>
    </location>
</feature>
<feature type="compositionally biased region" description="Low complexity" evidence="6">
    <location>
        <begin position="2214"/>
        <end position="2226"/>
    </location>
</feature>
<feature type="modified residue" description="Phosphoserine" evidence="13">
    <location>
        <position position="135"/>
    </location>
</feature>
<feature type="modified residue" description="Phosphoserine" evidence="13">
    <location>
        <position position="136"/>
    </location>
</feature>
<feature type="modified residue" description="Phosphoserine" evidence="13">
    <location>
        <position position="138"/>
    </location>
</feature>
<feature type="modified residue" description="Phosphothreonine" evidence="13">
    <location>
        <position position="200"/>
    </location>
</feature>
<feature type="modified residue" description="Phosphothreonine" evidence="13">
    <location>
        <position position="201"/>
    </location>
</feature>
<feature type="modified residue" description="Phosphoserine" evidence="13">
    <location>
        <position position="740"/>
    </location>
</feature>
<feature type="modified residue" description="Phosphoserine" evidence="13">
    <location>
        <position position="831"/>
    </location>
</feature>
<feature type="modified residue" description="Phosphoserine" evidence="13">
    <location>
        <position position="977"/>
    </location>
</feature>
<feature type="mutagenesis site" description="In ash1-21; induces lethality between prepupal and late pupal stages." evidence="15">
    <original>E</original>
    <variation>K</variation>
    <location>
        <position position="1284"/>
    </location>
</feature>
<feature type="mutagenesis site" description="In ash1-10; induces lethality between prepupal and late pupal stages." evidence="15">
    <original>N</original>
    <variation>I</variation>
    <location>
        <position position="1473"/>
    </location>
</feature>
<feature type="sequence conflict" description="In Ref. 1; AAB01100." evidence="17" ref="1">
    <original>A</original>
    <variation>G</variation>
    <location>
        <position position="163"/>
    </location>
</feature>
<feature type="sequence conflict" description="In Ref. 1; AAB01100." evidence="17" ref="1">
    <original>A</original>
    <variation>G</variation>
    <location>
        <position position="166"/>
    </location>
</feature>
<feature type="sequence conflict" description="In Ref. 1; AAB01100." evidence="17" ref="1">
    <original>P</original>
    <variation>T</variation>
    <location>
        <position position="320"/>
    </location>
</feature>
<feature type="sequence conflict" description="In Ref. 1; AAB01100." evidence="17" ref="1">
    <original>SS</original>
    <variation>RR</variation>
    <location>
        <begin position="324"/>
        <end position="325"/>
    </location>
</feature>
<feature type="sequence conflict" description="In Ref. 1; AAB01100." evidence="17" ref="1">
    <original>A</original>
    <variation>P</variation>
    <location>
        <position position="457"/>
    </location>
</feature>
<feature type="sequence conflict" description="In Ref. 4; AAM52758." evidence="17" ref="4">
    <original>Q</original>
    <variation>K</variation>
    <location>
        <position position="1001"/>
    </location>
</feature>
<feature type="sequence conflict" description="In Ref. 1; AAB01100." evidence="17" ref="1">
    <original>L</original>
    <variation>V</variation>
    <location>
        <position position="1191"/>
    </location>
</feature>
<feature type="sequence conflict" description="In Ref. 1; AAB01100." evidence="17" ref="1">
    <original>F</original>
    <variation>L</variation>
    <location>
        <position position="1246"/>
    </location>
</feature>
<feature type="sequence conflict" description="In Ref. 1; AAB01100." evidence="17" ref="1">
    <original>H</original>
    <variation>Q</variation>
    <location>
        <position position="1993"/>
    </location>
</feature>
<feature type="sequence conflict" description="In Ref. 1; AAB01100." evidence="17" ref="1">
    <original>R</original>
    <variation>P</variation>
    <location>
        <position position="2031"/>
    </location>
</feature>
<feature type="sequence conflict" description="In Ref. 1; AAB01100." evidence="17" ref="1">
    <original>V</original>
    <variation>L</variation>
    <location>
        <position position="2034"/>
    </location>
</feature>
<feature type="sequence conflict" description="In Ref. 1; AAB01100." evidence="17" ref="1">
    <original>T</original>
    <variation>P</variation>
    <location>
        <position position="2038"/>
    </location>
</feature>
<feature type="sequence conflict" description="In Ref. 1; AAB01100." evidence="17" ref="1">
    <original>C</original>
    <variation>S</variation>
    <location>
        <position position="2041"/>
    </location>
</feature>
<feature type="sequence conflict" description="In Ref. 1; AAB01100." evidence="17" ref="1">
    <original>R</original>
    <variation>P</variation>
    <location>
        <position position="2044"/>
    </location>
</feature>
<feature type="sequence conflict" description="In Ref. 1; AAB01100." evidence="17" ref="1">
    <original>R</original>
    <variation>C</variation>
    <location>
        <position position="2145"/>
    </location>
</feature>
<feature type="sequence conflict" description="In Ref. 1; AAB01100." evidence="17" ref="1">
    <original>L</original>
    <variation>H</variation>
    <location>
        <position position="2169"/>
    </location>
</feature>
<feature type="sequence conflict" description="In Ref. 1; AAB01100." evidence="17" ref="1">
    <original>I</original>
    <variation>V</variation>
    <location>
        <position position="2181"/>
    </location>
</feature>
<protein>
    <recommendedName>
        <fullName>Histone-lysine N-methyltransferase ash1</fullName>
        <ecNumber evidence="10">2.1.1.354</ecNumber>
    </recommendedName>
    <alternativeName>
        <fullName>Absent small and homeotic disks protein 1</fullName>
    </alternativeName>
    <alternativeName>
        <fullName>Lysine N-methyltransferase 2H</fullName>
    </alternativeName>
</protein>
<dbReference type="EC" id="2.1.1.354" evidence="10"/>
<dbReference type="EMBL" id="U49439">
    <property type="protein sequence ID" value="AAB01100.1"/>
    <property type="status" value="ALT_SEQ"/>
    <property type="molecule type" value="Genomic_DNA"/>
</dbReference>
<dbReference type="EMBL" id="AE014296">
    <property type="protein sequence ID" value="AAF49140.3"/>
    <property type="molecule type" value="Genomic_DNA"/>
</dbReference>
<dbReference type="EMBL" id="AE014296">
    <property type="protein sequence ID" value="AFH04505.1"/>
    <property type="molecule type" value="Genomic_DNA"/>
</dbReference>
<dbReference type="EMBL" id="AY122246">
    <property type="protein sequence ID" value="AAM52758.1"/>
    <property type="status" value="ALT_SEQ"/>
    <property type="molecule type" value="mRNA"/>
</dbReference>
<dbReference type="EMBL" id="BT031135">
    <property type="protein sequence ID" value="ABX00757.1"/>
    <property type="status" value="ALT_FRAME"/>
    <property type="molecule type" value="mRNA"/>
</dbReference>
<dbReference type="PIR" id="S71490">
    <property type="entry name" value="S71490"/>
</dbReference>
<dbReference type="RefSeq" id="NP_001246834.1">
    <property type="nucleotide sequence ID" value="NM_001259905.1"/>
</dbReference>
<dbReference type="RefSeq" id="NP_524160.2">
    <property type="nucleotide sequence ID" value="NM_079436.3"/>
</dbReference>
<dbReference type="SMR" id="Q9VW15"/>
<dbReference type="BioGRID" id="65403">
    <property type="interactions" value="19"/>
</dbReference>
<dbReference type="DIP" id="DIP-23637N"/>
<dbReference type="FunCoup" id="Q9VW15">
    <property type="interactions" value="332"/>
</dbReference>
<dbReference type="IntAct" id="Q9VW15">
    <property type="interactions" value="2"/>
</dbReference>
<dbReference type="STRING" id="7227.FBpp0297152"/>
<dbReference type="GlyGen" id="Q9VW15">
    <property type="glycosylation" value="4 sites, 1 O-linked glycan (1 site)"/>
</dbReference>
<dbReference type="iPTMnet" id="Q9VW15"/>
<dbReference type="PaxDb" id="7227-FBpp0297151"/>
<dbReference type="DNASU" id="40133"/>
<dbReference type="EnsemblMetazoa" id="FBtr0306009">
    <property type="protein sequence ID" value="FBpp0297151"/>
    <property type="gene ID" value="FBgn0005386"/>
</dbReference>
<dbReference type="EnsemblMetazoa" id="FBtr0306010">
    <property type="protein sequence ID" value="FBpp0297152"/>
    <property type="gene ID" value="FBgn0005386"/>
</dbReference>
<dbReference type="GeneID" id="40133"/>
<dbReference type="KEGG" id="dme:Dmel_CG8887"/>
<dbReference type="AGR" id="FB:FBgn0005386"/>
<dbReference type="CTD" id="40133"/>
<dbReference type="FlyBase" id="FBgn0005386">
    <property type="gene designation" value="ash1"/>
</dbReference>
<dbReference type="VEuPathDB" id="VectorBase:FBgn0005386"/>
<dbReference type="eggNOG" id="KOG1083">
    <property type="taxonomic scope" value="Eukaryota"/>
</dbReference>
<dbReference type="GeneTree" id="ENSGT00940000172679"/>
<dbReference type="HOGENOM" id="CLU_229222_0_0_1"/>
<dbReference type="InParanoid" id="Q9VW15"/>
<dbReference type="OMA" id="LCTPRNM"/>
<dbReference type="OrthoDB" id="79252at2759"/>
<dbReference type="PhylomeDB" id="Q9VW15"/>
<dbReference type="SignaLink" id="Q9VW15"/>
<dbReference type="BioGRID-ORCS" id="40133">
    <property type="hits" value="0 hits in 3 CRISPR screens"/>
</dbReference>
<dbReference type="GenomeRNAi" id="40133"/>
<dbReference type="PRO" id="PR:Q9VW15"/>
<dbReference type="Proteomes" id="UP000000803">
    <property type="component" value="Chromosome 3L"/>
</dbReference>
<dbReference type="Bgee" id="FBgn0005386">
    <property type="expression patterns" value="Expressed in transmedullary Y neuron TmY8 (Drosophila) in insect head and 206 other cell types or tissues"/>
</dbReference>
<dbReference type="GO" id="GO:0000785">
    <property type="term" value="C:chromatin"/>
    <property type="evidence" value="ECO:0000314"/>
    <property type="project" value="FlyBase"/>
</dbReference>
<dbReference type="GO" id="GO:0035097">
    <property type="term" value="C:histone methyltransferase complex"/>
    <property type="evidence" value="ECO:0000353"/>
    <property type="project" value="FlyBase"/>
</dbReference>
<dbReference type="GO" id="GO:0005654">
    <property type="term" value="C:nucleoplasm"/>
    <property type="evidence" value="ECO:0000318"/>
    <property type="project" value="GO_Central"/>
</dbReference>
<dbReference type="GO" id="GO:0005634">
    <property type="term" value="C:nucleus"/>
    <property type="evidence" value="ECO:0007005"/>
    <property type="project" value="FlyBase"/>
</dbReference>
<dbReference type="GO" id="GO:0005700">
    <property type="term" value="C:polytene chromosome"/>
    <property type="evidence" value="ECO:0000314"/>
    <property type="project" value="FlyBase"/>
</dbReference>
<dbReference type="GO" id="GO:0032991">
    <property type="term" value="C:protein-containing complex"/>
    <property type="evidence" value="ECO:0000353"/>
    <property type="project" value="FlyBase"/>
</dbReference>
<dbReference type="GO" id="GO:0003682">
    <property type="term" value="F:chromatin binding"/>
    <property type="evidence" value="ECO:0000314"/>
    <property type="project" value="FlyBase"/>
</dbReference>
<dbReference type="GO" id="GO:0035035">
    <property type="term" value="F:histone acetyltransferase binding"/>
    <property type="evidence" value="ECO:0000353"/>
    <property type="project" value="FlyBase"/>
</dbReference>
<dbReference type="GO" id="GO:0140954">
    <property type="term" value="F:histone H3K36 dimethyltransferase activity"/>
    <property type="evidence" value="ECO:0000315"/>
    <property type="project" value="FlyBase"/>
</dbReference>
<dbReference type="GO" id="GO:0046975">
    <property type="term" value="F:histone H3K36 methyltransferase activity"/>
    <property type="evidence" value="ECO:0000314"/>
    <property type="project" value="FlyBase"/>
</dbReference>
<dbReference type="GO" id="GO:0042800">
    <property type="term" value="F:histone H3K4 methyltransferase activity"/>
    <property type="evidence" value="ECO:0000314"/>
    <property type="project" value="FlyBase"/>
</dbReference>
<dbReference type="GO" id="GO:0140999">
    <property type="term" value="F:histone H3K4 trimethyltransferase activity"/>
    <property type="evidence" value="ECO:0007669"/>
    <property type="project" value="UniProtKB-EC"/>
</dbReference>
<dbReference type="GO" id="GO:0042054">
    <property type="term" value="F:histone methyltransferase activity"/>
    <property type="evidence" value="ECO:0000314"/>
    <property type="project" value="FlyBase"/>
</dbReference>
<dbReference type="GO" id="GO:0042802">
    <property type="term" value="F:identical protein binding"/>
    <property type="evidence" value="ECO:0000353"/>
    <property type="project" value="IntAct"/>
</dbReference>
<dbReference type="GO" id="GO:0008270">
    <property type="term" value="F:zinc ion binding"/>
    <property type="evidence" value="ECO:0007669"/>
    <property type="project" value="UniProtKB-KW"/>
</dbReference>
<dbReference type="GO" id="GO:0018991">
    <property type="term" value="P:egg-laying behavior"/>
    <property type="evidence" value="ECO:0000315"/>
    <property type="project" value="FlyBase"/>
</dbReference>
<dbReference type="GO" id="GO:0001700">
    <property type="term" value="P:embryonic development via the syncytial blastoderm"/>
    <property type="evidence" value="ECO:0000315"/>
    <property type="project" value="FlyBase"/>
</dbReference>
<dbReference type="GO" id="GO:0032259">
    <property type="term" value="P:methylation"/>
    <property type="evidence" value="ECO:0007669"/>
    <property type="project" value="UniProtKB-KW"/>
</dbReference>
<dbReference type="GO" id="GO:0048477">
    <property type="term" value="P:oogenesis"/>
    <property type="evidence" value="ECO:0000315"/>
    <property type="project" value="FlyBase"/>
</dbReference>
<dbReference type="GO" id="GO:0010628">
    <property type="term" value="P:positive regulation of gene expression"/>
    <property type="evidence" value="ECO:0000315"/>
    <property type="project" value="FlyBase"/>
</dbReference>
<dbReference type="GO" id="GO:0006355">
    <property type="term" value="P:regulation of DNA-templated transcription"/>
    <property type="evidence" value="ECO:0000315"/>
    <property type="project" value="FlyBase"/>
</dbReference>
<dbReference type="GO" id="GO:0045815">
    <property type="term" value="P:transcription initiation-coupled chromatin remodeling"/>
    <property type="evidence" value="ECO:0000315"/>
    <property type="project" value="FlyBase"/>
</dbReference>
<dbReference type="GO" id="GO:0141005">
    <property type="term" value="P:transposable element silencing by heterochromatin formation"/>
    <property type="evidence" value="ECO:0000315"/>
    <property type="project" value="FlyBase"/>
</dbReference>
<dbReference type="CDD" id="cd04717">
    <property type="entry name" value="BAH_polybromo"/>
    <property type="match status" value="1"/>
</dbReference>
<dbReference type="CDD" id="cd05525">
    <property type="entry name" value="Bromo_ASH1"/>
    <property type="match status" value="1"/>
</dbReference>
<dbReference type="CDD" id="cd15548">
    <property type="entry name" value="PHD_ASH1L"/>
    <property type="match status" value="1"/>
</dbReference>
<dbReference type="CDD" id="cd19174">
    <property type="entry name" value="SET_ASH1L"/>
    <property type="match status" value="1"/>
</dbReference>
<dbReference type="FunFam" id="2.170.270.10:FF:000011">
    <property type="entry name" value="Histone-lysine N-methyltransferase"/>
    <property type="match status" value="1"/>
</dbReference>
<dbReference type="FunFam" id="3.30.40.10:FF:000113">
    <property type="entry name" value="Histone-lysine N-methyltransferase"/>
    <property type="match status" value="1"/>
</dbReference>
<dbReference type="FunFam" id="2.30.30.490:FF:000039">
    <property type="entry name" value="Histone-lysine N-methyltransferase ash1"/>
    <property type="match status" value="1"/>
</dbReference>
<dbReference type="Gene3D" id="2.30.30.490">
    <property type="match status" value="1"/>
</dbReference>
<dbReference type="Gene3D" id="1.20.920.10">
    <property type="entry name" value="Bromodomain-like"/>
    <property type="match status" value="1"/>
</dbReference>
<dbReference type="Gene3D" id="2.170.270.10">
    <property type="entry name" value="SET domain"/>
    <property type="match status" value="1"/>
</dbReference>
<dbReference type="Gene3D" id="3.30.40.10">
    <property type="entry name" value="Zinc/RING finger domain, C3HC4 (zinc finger)"/>
    <property type="match status" value="1"/>
</dbReference>
<dbReference type="InterPro" id="IPR006560">
    <property type="entry name" value="AWS_dom"/>
</dbReference>
<dbReference type="InterPro" id="IPR001025">
    <property type="entry name" value="BAH_dom"/>
</dbReference>
<dbReference type="InterPro" id="IPR043151">
    <property type="entry name" value="BAH_sf"/>
</dbReference>
<dbReference type="InterPro" id="IPR043320">
    <property type="entry name" value="Bromo_ASH1L"/>
</dbReference>
<dbReference type="InterPro" id="IPR036427">
    <property type="entry name" value="Bromodomain-like_sf"/>
</dbReference>
<dbReference type="InterPro" id="IPR043319">
    <property type="entry name" value="PHD_ASH1L"/>
</dbReference>
<dbReference type="InterPro" id="IPR003616">
    <property type="entry name" value="Post-SET_dom"/>
</dbReference>
<dbReference type="InterPro" id="IPR001214">
    <property type="entry name" value="SET_dom"/>
</dbReference>
<dbReference type="InterPro" id="IPR046341">
    <property type="entry name" value="SET_dom_sf"/>
</dbReference>
<dbReference type="InterPro" id="IPR019786">
    <property type="entry name" value="Zinc_finger_PHD-type_CS"/>
</dbReference>
<dbReference type="InterPro" id="IPR011011">
    <property type="entry name" value="Znf_FYVE_PHD"/>
</dbReference>
<dbReference type="InterPro" id="IPR001965">
    <property type="entry name" value="Znf_PHD"/>
</dbReference>
<dbReference type="InterPro" id="IPR013083">
    <property type="entry name" value="Znf_RING/FYVE/PHD"/>
</dbReference>
<dbReference type="PANTHER" id="PTHR46147">
    <property type="entry name" value="HISTONE-LYSINE N-METHYLTRANSFERASE ASH1"/>
    <property type="match status" value="1"/>
</dbReference>
<dbReference type="PANTHER" id="PTHR46147:SF3">
    <property type="entry name" value="HISTONE-LYSINE N-METHYLTRANSFERASE ASH1"/>
    <property type="match status" value="1"/>
</dbReference>
<dbReference type="Pfam" id="PF17907">
    <property type="entry name" value="AWS"/>
    <property type="match status" value="1"/>
</dbReference>
<dbReference type="Pfam" id="PF01426">
    <property type="entry name" value="BAH"/>
    <property type="match status" value="1"/>
</dbReference>
<dbReference type="Pfam" id="PF20826">
    <property type="entry name" value="PHD_5"/>
    <property type="match status" value="1"/>
</dbReference>
<dbReference type="Pfam" id="PF00856">
    <property type="entry name" value="SET"/>
    <property type="match status" value="1"/>
</dbReference>
<dbReference type="SMART" id="SM00570">
    <property type="entry name" value="AWS"/>
    <property type="match status" value="1"/>
</dbReference>
<dbReference type="SMART" id="SM00439">
    <property type="entry name" value="BAH"/>
    <property type="match status" value="1"/>
</dbReference>
<dbReference type="SMART" id="SM00249">
    <property type="entry name" value="PHD"/>
    <property type="match status" value="1"/>
</dbReference>
<dbReference type="SMART" id="SM00317">
    <property type="entry name" value="SET"/>
    <property type="match status" value="1"/>
</dbReference>
<dbReference type="SUPFAM" id="SSF57903">
    <property type="entry name" value="FYVE/PHD zinc finger"/>
    <property type="match status" value="1"/>
</dbReference>
<dbReference type="SUPFAM" id="SSF82199">
    <property type="entry name" value="SET domain"/>
    <property type="match status" value="1"/>
</dbReference>
<dbReference type="PROSITE" id="PS51215">
    <property type="entry name" value="AWS"/>
    <property type="match status" value="1"/>
</dbReference>
<dbReference type="PROSITE" id="PS51038">
    <property type="entry name" value="BAH"/>
    <property type="match status" value="1"/>
</dbReference>
<dbReference type="PROSITE" id="PS50014">
    <property type="entry name" value="BROMODOMAIN_2"/>
    <property type="match status" value="1"/>
</dbReference>
<dbReference type="PROSITE" id="PS50868">
    <property type="entry name" value="POST_SET"/>
    <property type="match status" value="1"/>
</dbReference>
<dbReference type="PROSITE" id="PS50280">
    <property type="entry name" value="SET"/>
    <property type="match status" value="1"/>
</dbReference>
<dbReference type="PROSITE" id="PS01359">
    <property type="entry name" value="ZF_PHD_1"/>
    <property type="match status" value="1"/>
</dbReference>
<organism>
    <name type="scientific">Drosophila melanogaster</name>
    <name type="common">Fruit fly</name>
    <dbReference type="NCBI Taxonomy" id="7227"/>
    <lineage>
        <taxon>Eukaryota</taxon>
        <taxon>Metazoa</taxon>
        <taxon>Ecdysozoa</taxon>
        <taxon>Arthropoda</taxon>
        <taxon>Hexapoda</taxon>
        <taxon>Insecta</taxon>
        <taxon>Pterygota</taxon>
        <taxon>Neoptera</taxon>
        <taxon>Endopterygota</taxon>
        <taxon>Diptera</taxon>
        <taxon>Brachycera</taxon>
        <taxon>Muscomorpha</taxon>
        <taxon>Ephydroidea</taxon>
        <taxon>Drosophilidae</taxon>
        <taxon>Drosophila</taxon>
        <taxon>Sophophora</taxon>
    </lineage>
</organism>
<gene>
    <name type="primary">ash1</name>
    <name type="synonym">KMT2H</name>
    <name type="ORF">CG8887</name>
</gene>
<evidence type="ECO:0000255" key="1">
    <source>
        <dbReference type="PROSITE-ProRule" id="PRU00035"/>
    </source>
</evidence>
<evidence type="ECO:0000255" key="2">
    <source>
        <dbReference type="PROSITE-ProRule" id="PRU00155"/>
    </source>
</evidence>
<evidence type="ECO:0000255" key="3">
    <source>
        <dbReference type="PROSITE-ProRule" id="PRU00190"/>
    </source>
</evidence>
<evidence type="ECO:0000255" key="4">
    <source>
        <dbReference type="PROSITE-ProRule" id="PRU00370"/>
    </source>
</evidence>
<evidence type="ECO:0000255" key="5">
    <source>
        <dbReference type="PROSITE-ProRule" id="PRU00562"/>
    </source>
</evidence>
<evidence type="ECO:0000256" key="6">
    <source>
        <dbReference type="SAM" id="MobiDB-lite"/>
    </source>
</evidence>
<evidence type="ECO:0000269" key="7">
    <source>
    </source>
</evidence>
<evidence type="ECO:0000269" key="8">
    <source>
    </source>
</evidence>
<evidence type="ECO:0000269" key="9">
    <source>
    </source>
</evidence>
<evidence type="ECO:0000269" key="10">
    <source>
    </source>
</evidence>
<evidence type="ECO:0000269" key="11">
    <source>
    </source>
</evidence>
<evidence type="ECO:0000269" key="12">
    <source>
    </source>
</evidence>
<evidence type="ECO:0000269" key="13">
    <source>
    </source>
</evidence>
<evidence type="ECO:0000269" key="14">
    <source>
    </source>
</evidence>
<evidence type="ECO:0000269" key="15">
    <source>
    </source>
</evidence>
<evidence type="ECO:0000269" key="16">
    <source>
    </source>
</evidence>
<evidence type="ECO:0000305" key="17"/>
<evidence type="ECO:0000305" key="18">
    <source>
    </source>
</evidence>
<evidence type="ECO:0000305" key="19">
    <source>
    </source>
</evidence>
<sequence length="2226" mass="246266">MSCSQNETAAAKVLETQRAQESGSENEETDSITDQSSQSKSIKSATQFSVQRSDTDGLRMRISAIRPTLGVVATKKPPKSRKMSTQDTESGCSEAKNRAVSKKVKVKRKKLASSSGISKSDKVSKSKKSQISAFSSDSEDDLPLKVHQQRAPRVLLSAIIQAAQSASKPTLDIGISSSDNELPNLVQAAIKRVESDTEDTTVEGSFRKAAKDKNLPQYQSTLLQDFMEKTQMLGQTVNAKLAEEKVAKAKEETLVQTAVPRKRRGRPKKVVPTVPAPGNSGPAINESADSGVISTTSTTQSTTPSPKMQNENAVPTGSLPIASSSKPKIDMAYLDKRMYATERVLYPPPRSKRRQNNKKTACSSSNKEELQLDPLWREIDVNKKFRLRSMSVGAASGTGASTTICSKVLAAKSGYVSDYGSVRHQRSSHNHNSGYKSDASCKSRYSTKSCMSRRSRAKSCGYRSDCKESGKSGLRMRRKRRASMLLKSSADDTVEDQDILQLAGLSLGQSSEESNEYISKPSLKSLPTTSASKKYGEINRYVTTGQYFGRGGSLSATNPDNFISKMMNQRKETPAPSKSSCKIKSRRSSAASMCSSYVSGVSRMRRRHRRKSFSHNKSLNIDSKLLTEIEIITSTFNSRCRIQDDRLTGSSGKEKLLADANKLQATLAAPSPAQQLTLNGGGPASTLSKPLKRGLKKRKLSEPLVDFAMLSASASGTPNGSGSSNGNTKRRHKKSQSNDSSSPDDHKLPLKKRHYLLTPGERPPAEVAFANGKLNAEAWAAAAAAAKSTASTKSQAQFNARSVKSALTPKKRHLLEQPTSVSGAGSSASNSPLRIVVDNNSISGGKLLDISPSSLCSLKQQRRGGAAKQKVSAAKDLVQLQSPAGSYPPPGVFEPSVELEIQIPLSKLNESVITKAEVESPLLSALDIKEDTKKEVGQRVVETLLHKTGGNLLLKRKRKKINRTGFPTVRRKKRKVSVEQQTTAVIDEHEPEFDPDDEPLQSLRETRSSNNVNVQAAPNPPLDCERVPQAGEARETFVARTNQKAPRLSVVALERLQRPQTPARGRPRGRKPKNREQAEAAPQPPPKSEPEIRPAKKRGRQPKQPVLEEPPPTPPPQQKKNKMEPNIRLPDGIDPNTNFSCKIRLKRRKNLEAGTQPKKEKPVQPVTVEEIPPEIPVSQEEIDAEAEAKRLDSIPTEHDPLPASESHNPGPQDYASCSESSEDKASTTSLRKLSKVKKTYLVAGLFSNHYKQSLMPPPAKVNKKPGLEEQVGPASLLPPPPYCEKYLRRTEMDFELPYDIWWAYTNSKLPTRNVVPSWNYRKIRTNVYAESVRPNLAGFDHPTCNCKNQGEKSCLDNCLNRMVYTECSPSNCPAGEKCRNQKIQRHAVAPGVERFMTADKGWGVRTKLPIAKGTYILEYVGEVVTEKEFKQRMASIYLNDTHHYCLHLDGGLVIDGQRMGSDCRFVNHSCEPNCEMQKWSVNGLSRMVLFAKRAIEEGEELTYDYNFSLFNPSEGQPCRCNTPQCRGVIGGKSQRVKPLPAVEAKPSGEGLSGRNGRQRKQKAKKHAQRQAGKDISSAVAVAKLQPLSEKEKKLVRQFNTFLVRNFEKIRRCKAKRASDAAATASSPALGTTNGDIPGRRPSTPSSPSLAAQISALCSPRNIKTRGLTQAVHDPELEKMAKMAVVLRDICSAMETLKMSDLLTTVSSKKKKPIKTTLSGKLGSTAATSKVEFRSIQAQVEQGHYKTPQEFDDHMQQLFVEAKQQHGDDEGKEKALQSLKDSYEQQKIASYVQLVEILGDSESLQSFKPKEVLSSEEEPGKIAVKKSPGAKERDSPIVPLKVTPPPLLPIEASPDEDVIRCICGLYKDEGLMIQCSKCMVWQHTECTKADIDADNYQCERCEPREVDREIPLEEFTEEGHRYYLSLMRGDLQVRQGDAVYVLRDIPIKDESGKVLPTKKHTYETIGAIDYQECDIFRVEHLWKNELGKRFIFGHHFLRPHETFHEPSRRFYPNEVVRVSLYEVVPIELVIGRCWVLDRTTFCKGRPMECNDEDHCYICELRVDKTARFFSKAKANHPACTKSYAFRKFPEKIKISKSYAPHDVDPSLLKTRKQKTELDVGAGPTTMHKVSGRQEQHQAKMVGRKPRGISAPADATAVHVVTPVAPNKQMLKKRKSRLENVLITMKLKCLDAQTAQEQPIDLSYLLSGRGARQRKTQQSSSSSTANST</sequence>
<keyword id="KW-0010">Activator</keyword>
<keyword id="KW-0103">Bromodomain</keyword>
<keyword id="KW-0156">Chromatin regulator</keyword>
<keyword id="KW-0158">Chromosome</keyword>
<keyword id="KW-0217">Developmental protein</keyword>
<keyword id="KW-0479">Metal-binding</keyword>
<keyword id="KW-0489">Methyltransferase</keyword>
<keyword id="KW-0539">Nucleus</keyword>
<keyword id="KW-0597">Phosphoprotein</keyword>
<keyword id="KW-1185">Reference proteome</keyword>
<keyword id="KW-0677">Repeat</keyword>
<keyword id="KW-0949">S-adenosyl-L-methionine</keyword>
<keyword id="KW-0804">Transcription</keyword>
<keyword id="KW-0805">Transcription regulation</keyword>
<keyword id="KW-0808">Transferase</keyword>
<keyword id="KW-0862">Zinc</keyword>
<keyword id="KW-0863">Zinc-finger</keyword>